<evidence type="ECO:0000255" key="1">
    <source>
        <dbReference type="HAMAP-Rule" id="MF_01390"/>
    </source>
</evidence>
<reference key="1">
    <citation type="journal article" date="2003" name="Tropics">
        <title>Phylogeny and genetic variation of Fagaceae in tropical montane forests.</title>
        <authorList>
            <person name="Kamiya K."/>
            <person name="Harada K."/>
            <person name="Ogino K."/>
            <person name="Mahani M.C."/>
            <person name="Latiff A."/>
        </authorList>
    </citation>
    <scope>NUCLEOTIDE SEQUENCE [GENOMIC DNA]</scope>
</reference>
<proteinExistence type="inferred from homology"/>
<keyword id="KW-0150">Chloroplast</keyword>
<keyword id="KW-0507">mRNA processing</keyword>
<keyword id="KW-0934">Plastid</keyword>
<keyword id="KW-0694">RNA-binding</keyword>
<keyword id="KW-0819">tRNA processing</keyword>
<gene>
    <name evidence="1" type="primary">matK</name>
</gene>
<dbReference type="EMBL" id="AB125037">
    <property type="protein sequence ID" value="BAD14100.1"/>
    <property type="molecule type" value="Genomic_DNA"/>
</dbReference>
<dbReference type="GO" id="GO:0009507">
    <property type="term" value="C:chloroplast"/>
    <property type="evidence" value="ECO:0007669"/>
    <property type="project" value="UniProtKB-SubCell"/>
</dbReference>
<dbReference type="GO" id="GO:0003723">
    <property type="term" value="F:RNA binding"/>
    <property type="evidence" value="ECO:0007669"/>
    <property type="project" value="UniProtKB-KW"/>
</dbReference>
<dbReference type="GO" id="GO:0006397">
    <property type="term" value="P:mRNA processing"/>
    <property type="evidence" value="ECO:0007669"/>
    <property type="project" value="UniProtKB-KW"/>
</dbReference>
<dbReference type="GO" id="GO:0008380">
    <property type="term" value="P:RNA splicing"/>
    <property type="evidence" value="ECO:0007669"/>
    <property type="project" value="UniProtKB-UniRule"/>
</dbReference>
<dbReference type="GO" id="GO:0008033">
    <property type="term" value="P:tRNA processing"/>
    <property type="evidence" value="ECO:0007669"/>
    <property type="project" value="UniProtKB-KW"/>
</dbReference>
<dbReference type="HAMAP" id="MF_01390">
    <property type="entry name" value="MatK"/>
    <property type="match status" value="1"/>
</dbReference>
<dbReference type="InterPro" id="IPR024937">
    <property type="entry name" value="Domain_X"/>
</dbReference>
<dbReference type="InterPro" id="IPR002866">
    <property type="entry name" value="Maturase_MatK"/>
</dbReference>
<dbReference type="InterPro" id="IPR024942">
    <property type="entry name" value="Maturase_MatK_N"/>
</dbReference>
<dbReference type="PANTHER" id="PTHR34811">
    <property type="entry name" value="MATURASE K"/>
    <property type="match status" value="1"/>
</dbReference>
<dbReference type="PANTHER" id="PTHR34811:SF1">
    <property type="entry name" value="MATURASE K"/>
    <property type="match status" value="1"/>
</dbReference>
<dbReference type="Pfam" id="PF01348">
    <property type="entry name" value="Intron_maturas2"/>
    <property type="match status" value="1"/>
</dbReference>
<dbReference type="Pfam" id="PF01824">
    <property type="entry name" value="MatK_N"/>
    <property type="match status" value="1"/>
</dbReference>
<comment type="function">
    <text evidence="1">Usually encoded in the trnK tRNA gene intron. Probably assists in splicing its own and other chloroplast group II introns.</text>
</comment>
<comment type="subcellular location">
    <subcellularLocation>
        <location>Plastid</location>
        <location>Chloroplast</location>
    </subcellularLocation>
</comment>
<comment type="similarity">
    <text evidence="1">Belongs to the intron maturase 2 family. MatK subfamily.</text>
</comment>
<geneLocation type="chloroplast"/>
<sequence length="504" mass="59253">MEEYQGYLELDRFRQHDFLYPLIFREYSYALAHGHGLNRYMLLENIGYDNKSSLLIVKRLITTMYQQNYLIISANDSKQNPFFGYNKNLHSKILSEGFAIIVEIPFYLRLISSLEGAEIVRFYNLRSIHSIFPFLEEKFPHLNYSADILIPYPAHLEILVQTLRYRVKDASYLHLLRFFLHEYSNCNSLIITNKSLSIFSKSNPRFFLFLYNSYICEYESIFLFLRNQSSHLRLTSSGILFERLCLYRKIEHFAEVFANDFTGIPCFLKDPFMHYVRYQGKSILASKDTPLLMNKCKSYLVNLWQCHFDVWSHAASIRINQLSKHSLDFLSYLSSVRRNPAVVRNQMLENSFLLNNAPNKLDTIVPIIPLIGSLAKAKFCNAVGHPISKLTRADLSDFEIINRFLHICRNLSHYYSGSSKKKNMYRIKYILRLSCVKTLARKHKSTARAFLKRVDSEFFQEFFTEEGGFISLIFPRASFALRRLYSGRVWYLDIIFINGLSNHE</sequence>
<organism>
    <name type="scientific">Quercus ilex</name>
    <name type="common">Holly oak</name>
    <dbReference type="NCBI Taxonomy" id="58334"/>
    <lineage>
        <taxon>Eukaryota</taxon>
        <taxon>Viridiplantae</taxon>
        <taxon>Streptophyta</taxon>
        <taxon>Embryophyta</taxon>
        <taxon>Tracheophyta</taxon>
        <taxon>Spermatophyta</taxon>
        <taxon>Magnoliopsida</taxon>
        <taxon>eudicotyledons</taxon>
        <taxon>Gunneridae</taxon>
        <taxon>Pentapetalae</taxon>
        <taxon>rosids</taxon>
        <taxon>fabids</taxon>
        <taxon>Fagales</taxon>
        <taxon>Fagaceae</taxon>
        <taxon>Quercus</taxon>
    </lineage>
</organism>
<accession>Q75VB2</accession>
<protein>
    <recommendedName>
        <fullName evidence="1">Maturase K</fullName>
    </recommendedName>
    <alternativeName>
        <fullName evidence="1">Intron maturase</fullName>
    </alternativeName>
</protein>
<feature type="chain" id="PRO_0000143662" description="Maturase K">
    <location>
        <begin position="1"/>
        <end position="504"/>
    </location>
</feature>
<name>MATK_QUEIL</name>